<reference key="1">
    <citation type="journal article" date="1996" name="DNA Res.">
        <title>Sequence analysis of the genome of the unicellular cyanobacterium Synechocystis sp. strain PCC6803. II. Sequence determination of the entire genome and assignment of potential protein-coding regions.</title>
        <authorList>
            <person name="Kaneko T."/>
            <person name="Sato S."/>
            <person name="Kotani H."/>
            <person name="Tanaka A."/>
            <person name="Asamizu E."/>
            <person name="Nakamura Y."/>
            <person name="Miyajima N."/>
            <person name="Hirosawa M."/>
            <person name="Sugiura M."/>
            <person name="Sasamoto S."/>
            <person name="Kimura T."/>
            <person name="Hosouchi T."/>
            <person name="Matsuno A."/>
            <person name="Muraki A."/>
            <person name="Nakazaki N."/>
            <person name="Naruo K."/>
            <person name="Okumura S."/>
            <person name="Shimpo S."/>
            <person name="Takeuchi C."/>
            <person name="Wada T."/>
            <person name="Watanabe A."/>
            <person name="Yamada M."/>
            <person name="Yasuda M."/>
            <person name="Tabata S."/>
        </authorList>
    </citation>
    <scope>NUCLEOTIDE SEQUENCE [LARGE SCALE GENOMIC DNA]</scope>
    <source>
        <strain>ATCC 27184 / PCC 6803 / Kazusa</strain>
    </source>
</reference>
<sequence length="308" mass="32538">MDFASGLPIFIVTLREALEASLVVGIVLACLARAQQMQLKGWVYRGISAGVVASVLVGCLLAGVLQGVERLPGPYTPILKALLAALLGAIAVGMLSWMLLWMTKQARSLRGEIQGQINQAVEKEGGGKAIAIVVFIAVVREGFEMVLFLAAQQNMANPAAIGAALAGIGTAVVMAFLIFRLGVKLNLKLFFQVMGTLLLIIVGGLVIGVLKNLDLAVSMMGLANLGLGYLCFVPGDSCLLGPLLWNLAPWLPDNQFPGIVLKTLAGYRDHLYLFQAIAYGIFLSVIGSLYFRGLAGKGDAPQAVAQKS</sequence>
<proteinExistence type="inferred from homology"/>
<evidence type="ECO:0000255" key="1"/>
<evidence type="ECO:0000305" key="2"/>
<accession>P72855</accession>
<dbReference type="EMBL" id="BA000022">
    <property type="protein sequence ID" value="BAA16870.1"/>
    <property type="molecule type" value="Genomic_DNA"/>
</dbReference>
<dbReference type="PIR" id="S74719">
    <property type="entry name" value="S74719"/>
</dbReference>
<dbReference type="STRING" id="1148.gene:10497729"/>
<dbReference type="PaxDb" id="1148-1651944"/>
<dbReference type="EnsemblBacteria" id="BAA16870">
    <property type="protein sequence ID" value="BAA16870"/>
    <property type="gene ID" value="BAA16870"/>
</dbReference>
<dbReference type="KEGG" id="syn:slr0964"/>
<dbReference type="eggNOG" id="COG0672">
    <property type="taxonomic scope" value="Bacteria"/>
</dbReference>
<dbReference type="InParanoid" id="P72855"/>
<dbReference type="PhylomeDB" id="P72855"/>
<dbReference type="Proteomes" id="UP000001425">
    <property type="component" value="Chromosome"/>
</dbReference>
<dbReference type="GO" id="GO:0033573">
    <property type="term" value="C:high-affinity iron permease complex"/>
    <property type="evidence" value="ECO:0007669"/>
    <property type="project" value="InterPro"/>
</dbReference>
<dbReference type="GO" id="GO:0005886">
    <property type="term" value="C:plasma membrane"/>
    <property type="evidence" value="ECO:0000318"/>
    <property type="project" value="GO_Central"/>
</dbReference>
<dbReference type="GO" id="GO:0015093">
    <property type="term" value="F:ferrous iron transmembrane transporter activity"/>
    <property type="evidence" value="ECO:0000318"/>
    <property type="project" value="GO_Central"/>
</dbReference>
<dbReference type="GO" id="GO:0034755">
    <property type="term" value="P:iron ion transmembrane transport"/>
    <property type="evidence" value="ECO:0000318"/>
    <property type="project" value="GO_Central"/>
</dbReference>
<dbReference type="InterPro" id="IPR005217">
    <property type="entry name" value="EfeU/FTR1-like"/>
</dbReference>
<dbReference type="InterPro" id="IPR004923">
    <property type="entry name" value="FTR1/Fip1/EfeU"/>
</dbReference>
<dbReference type="NCBIfam" id="TIGR00145">
    <property type="entry name" value="EfeU/Ftr1 family ferrous iron transporter subunit"/>
    <property type="match status" value="1"/>
</dbReference>
<dbReference type="PANTHER" id="PTHR31632">
    <property type="entry name" value="IRON TRANSPORTER FTH1"/>
    <property type="match status" value="1"/>
</dbReference>
<dbReference type="PANTHER" id="PTHR31632:SF2">
    <property type="entry name" value="PLASMA MEMBRANE IRON PERMEASE"/>
    <property type="match status" value="1"/>
</dbReference>
<dbReference type="Pfam" id="PF03239">
    <property type="entry name" value="FTR1"/>
    <property type="match status" value="1"/>
</dbReference>
<gene>
    <name type="ordered locus">slr0964</name>
</gene>
<name>Y964_SYNY3</name>
<organism>
    <name type="scientific">Synechocystis sp. (strain ATCC 27184 / PCC 6803 / Kazusa)</name>
    <dbReference type="NCBI Taxonomy" id="1111708"/>
    <lineage>
        <taxon>Bacteria</taxon>
        <taxon>Bacillati</taxon>
        <taxon>Cyanobacteriota</taxon>
        <taxon>Cyanophyceae</taxon>
        <taxon>Synechococcales</taxon>
        <taxon>Merismopediaceae</taxon>
        <taxon>Synechocystis</taxon>
    </lineage>
</organism>
<comment type="subcellular location">
    <subcellularLocation>
        <location evidence="2">Cell membrane</location>
        <topology evidence="2">Multi-pass membrane protein</topology>
    </subcellularLocation>
</comment>
<comment type="similarity">
    <text evidence="2">Belongs to the oxidase-dependent Fe transporter (OFeT) (TC 9.A.10.1) family.</text>
</comment>
<feature type="chain" id="PRO_0000159653" description="Uncharacterized protein slr0964">
    <location>
        <begin position="1"/>
        <end position="308"/>
    </location>
</feature>
<feature type="transmembrane region" description="Helical" evidence="1">
    <location>
        <begin position="46"/>
        <end position="66"/>
    </location>
</feature>
<feature type="transmembrane region" description="Helical" evidence="1">
    <location>
        <begin position="82"/>
        <end position="102"/>
    </location>
</feature>
<feature type="transmembrane region" description="Helical" evidence="1">
    <location>
        <begin position="159"/>
        <end position="179"/>
    </location>
</feature>
<feature type="transmembrane region" description="Helical" evidence="1">
    <location>
        <begin position="190"/>
        <end position="210"/>
    </location>
</feature>
<feature type="transmembrane region" description="Helical" evidence="1">
    <location>
        <begin position="271"/>
        <end position="291"/>
    </location>
</feature>
<keyword id="KW-1003">Cell membrane</keyword>
<keyword id="KW-0472">Membrane</keyword>
<keyword id="KW-1185">Reference proteome</keyword>
<keyword id="KW-0812">Transmembrane</keyword>
<keyword id="KW-1133">Transmembrane helix</keyword>
<protein>
    <recommendedName>
        <fullName>Uncharacterized protein slr0964</fullName>
    </recommendedName>
</protein>